<feature type="chain" id="PRO_1000086077" description="Small ribosomal subunit protein uS5">
    <location>
        <begin position="1"/>
        <end position="167"/>
    </location>
</feature>
<feature type="domain" description="S5 DRBM" evidence="1">
    <location>
        <begin position="11"/>
        <end position="74"/>
    </location>
</feature>
<protein>
    <recommendedName>
        <fullName evidence="1">Small ribosomal subunit protein uS5</fullName>
    </recommendedName>
    <alternativeName>
        <fullName evidence="2">30S ribosomal protein S5</fullName>
    </alternativeName>
</protein>
<keyword id="KW-0687">Ribonucleoprotein</keyword>
<keyword id="KW-0689">Ribosomal protein</keyword>
<keyword id="KW-0694">RNA-binding</keyword>
<keyword id="KW-0699">rRNA-binding</keyword>
<name>RS5_YERPN</name>
<proteinExistence type="inferred from homology"/>
<dbReference type="EMBL" id="CP000305">
    <property type="protein sequence ID" value="ABG20169.1"/>
    <property type="molecule type" value="Genomic_DNA"/>
</dbReference>
<dbReference type="EMBL" id="ACNQ01000019">
    <property type="protein sequence ID" value="EEO74757.1"/>
    <property type="molecule type" value="Genomic_DNA"/>
</dbReference>
<dbReference type="RefSeq" id="WP_002213337.1">
    <property type="nucleotide sequence ID" value="NZ_ACNQ01000019.1"/>
</dbReference>
<dbReference type="SMR" id="Q1CCW1"/>
<dbReference type="GeneID" id="82552805"/>
<dbReference type="KEGG" id="ypn:YPN_3842"/>
<dbReference type="HOGENOM" id="CLU_065898_2_2_6"/>
<dbReference type="Proteomes" id="UP000008936">
    <property type="component" value="Chromosome"/>
</dbReference>
<dbReference type="GO" id="GO:0015935">
    <property type="term" value="C:small ribosomal subunit"/>
    <property type="evidence" value="ECO:0007669"/>
    <property type="project" value="InterPro"/>
</dbReference>
<dbReference type="GO" id="GO:0019843">
    <property type="term" value="F:rRNA binding"/>
    <property type="evidence" value="ECO:0007669"/>
    <property type="project" value="UniProtKB-UniRule"/>
</dbReference>
<dbReference type="GO" id="GO:0003735">
    <property type="term" value="F:structural constituent of ribosome"/>
    <property type="evidence" value="ECO:0007669"/>
    <property type="project" value="InterPro"/>
</dbReference>
<dbReference type="GO" id="GO:0006412">
    <property type="term" value="P:translation"/>
    <property type="evidence" value="ECO:0007669"/>
    <property type="project" value="UniProtKB-UniRule"/>
</dbReference>
<dbReference type="FunFam" id="3.30.160.20:FF:000001">
    <property type="entry name" value="30S ribosomal protein S5"/>
    <property type="match status" value="1"/>
</dbReference>
<dbReference type="FunFam" id="3.30.230.10:FF:000002">
    <property type="entry name" value="30S ribosomal protein S5"/>
    <property type="match status" value="1"/>
</dbReference>
<dbReference type="Gene3D" id="3.30.160.20">
    <property type="match status" value="1"/>
</dbReference>
<dbReference type="Gene3D" id="3.30.230.10">
    <property type="match status" value="1"/>
</dbReference>
<dbReference type="HAMAP" id="MF_01307_B">
    <property type="entry name" value="Ribosomal_uS5_B"/>
    <property type="match status" value="1"/>
</dbReference>
<dbReference type="InterPro" id="IPR020568">
    <property type="entry name" value="Ribosomal_Su5_D2-typ_SF"/>
</dbReference>
<dbReference type="InterPro" id="IPR000851">
    <property type="entry name" value="Ribosomal_uS5"/>
</dbReference>
<dbReference type="InterPro" id="IPR005712">
    <property type="entry name" value="Ribosomal_uS5_bac-type"/>
</dbReference>
<dbReference type="InterPro" id="IPR005324">
    <property type="entry name" value="Ribosomal_uS5_C"/>
</dbReference>
<dbReference type="InterPro" id="IPR013810">
    <property type="entry name" value="Ribosomal_uS5_N"/>
</dbReference>
<dbReference type="InterPro" id="IPR018192">
    <property type="entry name" value="Ribosomal_uS5_N_CS"/>
</dbReference>
<dbReference type="InterPro" id="IPR014721">
    <property type="entry name" value="Ribsml_uS5_D2-typ_fold_subgr"/>
</dbReference>
<dbReference type="NCBIfam" id="TIGR01021">
    <property type="entry name" value="rpsE_bact"/>
    <property type="match status" value="1"/>
</dbReference>
<dbReference type="PANTHER" id="PTHR48277">
    <property type="entry name" value="MITOCHONDRIAL RIBOSOMAL PROTEIN S5"/>
    <property type="match status" value="1"/>
</dbReference>
<dbReference type="PANTHER" id="PTHR48277:SF1">
    <property type="entry name" value="MITOCHONDRIAL RIBOSOMAL PROTEIN S5"/>
    <property type="match status" value="1"/>
</dbReference>
<dbReference type="Pfam" id="PF00333">
    <property type="entry name" value="Ribosomal_S5"/>
    <property type="match status" value="1"/>
</dbReference>
<dbReference type="Pfam" id="PF03719">
    <property type="entry name" value="Ribosomal_S5_C"/>
    <property type="match status" value="1"/>
</dbReference>
<dbReference type="SUPFAM" id="SSF54768">
    <property type="entry name" value="dsRNA-binding domain-like"/>
    <property type="match status" value="1"/>
</dbReference>
<dbReference type="SUPFAM" id="SSF54211">
    <property type="entry name" value="Ribosomal protein S5 domain 2-like"/>
    <property type="match status" value="1"/>
</dbReference>
<dbReference type="PROSITE" id="PS00585">
    <property type="entry name" value="RIBOSOMAL_S5"/>
    <property type="match status" value="1"/>
</dbReference>
<dbReference type="PROSITE" id="PS50881">
    <property type="entry name" value="S5_DSRBD"/>
    <property type="match status" value="1"/>
</dbReference>
<reference key="1">
    <citation type="journal article" date="2006" name="J. Bacteriol.">
        <title>Complete genome sequence of Yersinia pestis strains Antiqua and Nepal516: evidence of gene reduction in an emerging pathogen.</title>
        <authorList>
            <person name="Chain P.S.G."/>
            <person name="Hu P."/>
            <person name="Malfatti S.A."/>
            <person name="Radnedge L."/>
            <person name="Larimer F."/>
            <person name="Vergez L.M."/>
            <person name="Worsham P."/>
            <person name="Chu M.C."/>
            <person name="Andersen G.L."/>
        </authorList>
    </citation>
    <scope>NUCLEOTIDE SEQUENCE [LARGE SCALE GENOMIC DNA]</scope>
    <source>
        <strain>Nepal516</strain>
    </source>
</reference>
<reference key="2">
    <citation type="submission" date="2009-04" db="EMBL/GenBank/DDBJ databases">
        <title>Yersinia pestis Nepal516A whole genome shotgun sequencing project.</title>
        <authorList>
            <person name="Plunkett G. III"/>
            <person name="Anderson B.D."/>
            <person name="Baumler D.J."/>
            <person name="Burland V."/>
            <person name="Cabot E.L."/>
            <person name="Glasner J.D."/>
            <person name="Mau B."/>
            <person name="Neeno-Eckwall E."/>
            <person name="Perna N.T."/>
            <person name="Munk A.C."/>
            <person name="Tapia R."/>
            <person name="Green L.D."/>
            <person name="Rogers Y.C."/>
            <person name="Detter J.C."/>
            <person name="Bruce D.C."/>
            <person name="Brettin T.S."/>
        </authorList>
    </citation>
    <scope>NUCLEOTIDE SEQUENCE [LARGE SCALE GENOMIC DNA]</scope>
    <source>
        <strain>Nepal516</strain>
    </source>
</reference>
<sequence length="167" mass="17533">MSHIEKQAGELQEKLIAVNRVSKTVKGGRIFSFTALTVVGDGNGRVGFGYGKAREVPAAIQKAMEKARRAMINVALNNGTLQHPVKGAHTGSRVFMQPASEGTGIIAGGAMRAVLEVAGVHNVLAKAYGSTNPINVVRATIAALEDMKSPEMVAAKRGKSVEEILGK</sequence>
<organism>
    <name type="scientific">Yersinia pestis bv. Antiqua (strain Nepal516)</name>
    <dbReference type="NCBI Taxonomy" id="377628"/>
    <lineage>
        <taxon>Bacteria</taxon>
        <taxon>Pseudomonadati</taxon>
        <taxon>Pseudomonadota</taxon>
        <taxon>Gammaproteobacteria</taxon>
        <taxon>Enterobacterales</taxon>
        <taxon>Yersiniaceae</taxon>
        <taxon>Yersinia</taxon>
    </lineage>
</organism>
<comment type="function">
    <text evidence="1">With S4 and S12 plays an important role in translational accuracy.</text>
</comment>
<comment type="function">
    <text evidence="1">Located at the back of the 30S subunit body where it stabilizes the conformation of the head with respect to the body.</text>
</comment>
<comment type="subunit">
    <text evidence="1">Part of the 30S ribosomal subunit. Contacts proteins S4 and S8.</text>
</comment>
<comment type="domain">
    <text>The N-terminal domain interacts with the head of the 30S subunit; the C-terminal domain interacts with the body and contacts protein S4. The interaction surface between S4 and S5 is involved in control of translational fidelity.</text>
</comment>
<comment type="similarity">
    <text evidence="1">Belongs to the universal ribosomal protein uS5 family.</text>
</comment>
<gene>
    <name evidence="1" type="primary">rpsE</name>
    <name type="ordered locus">YPN_3842</name>
    <name type="ORF">YP516_4365</name>
</gene>
<evidence type="ECO:0000255" key="1">
    <source>
        <dbReference type="HAMAP-Rule" id="MF_01307"/>
    </source>
</evidence>
<evidence type="ECO:0000305" key="2"/>
<accession>Q1CCW1</accession>
<accession>D1Q2K4</accession>